<feature type="chain" id="PRO_0000252618" description="Glucose-6-phosphate isomerase">
    <location>
        <begin position="1"/>
        <end position="533"/>
    </location>
</feature>
<feature type="active site" description="Proton donor" evidence="1">
    <location>
        <position position="322"/>
    </location>
</feature>
<feature type="active site" evidence="1">
    <location>
        <position position="351"/>
    </location>
</feature>
<feature type="active site" evidence="1">
    <location>
        <position position="455"/>
    </location>
</feature>
<gene>
    <name evidence="1" type="primary">pgi</name>
    <name type="ordered locus">DSY2034</name>
</gene>
<sequence>MVTITSWKRFKEYLYYDQELGLLLDISRMNFSAEFLRSMAEPMREAYHQLQLLEKGALANPDEGRMVGHYWLRNPDLAPTEEIVQDIKETLKEILDFAEQIHSGRLQGEKGNPFRNILLVGVGGSILGPRFVADALASSRDKMKAFFIDNGDPDGIDRVLSRIGEELPATLCLIISKSGGTIETRNGMLEVRRAYKEAGLSFPDHAVAITQRGSQLDKLSQKEGWLRAFPMWDWVGGRTSLLSAVGLLSLALQGIDVAGLLQGAKDCDGRTRRPDTLDNPGALLALMWYYSTQGQGGKQMVVLPYKDRLELFTKYLQQLIMESLGKEKNLQGETVHQGITVYGNKGSSDQHSYLQQLLEGPDNFFVTFIEVLKDRQGPSTYMEENSTSGEYLQAFLLGTREALTQKGRESLTITVKEVNAYTIGVLIALFERAVSIYALLVGINAYHQPAVEMGKKAAGQAIQLKNNIVEFLKSHPGKKFSVSELALAIQEEEHQEMVFKLLLHLTTNPEHGVNMEPGEPWPESRFFVGGPIS</sequence>
<keyword id="KW-0963">Cytoplasm</keyword>
<keyword id="KW-0312">Gluconeogenesis</keyword>
<keyword id="KW-0324">Glycolysis</keyword>
<keyword id="KW-0413">Isomerase</keyword>
<keyword id="KW-1185">Reference proteome</keyword>
<name>G6PI_DESHY</name>
<comment type="function">
    <text evidence="1">Catalyzes the reversible isomerization of glucose-6-phosphate to fructose-6-phosphate.</text>
</comment>
<comment type="catalytic activity">
    <reaction evidence="1">
        <text>alpha-D-glucose 6-phosphate = beta-D-fructose 6-phosphate</text>
        <dbReference type="Rhea" id="RHEA:11816"/>
        <dbReference type="ChEBI" id="CHEBI:57634"/>
        <dbReference type="ChEBI" id="CHEBI:58225"/>
        <dbReference type="EC" id="5.3.1.9"/>
    </reaction>
</comment>
<comment type="pathway">
    <text evidence="1">Carbohydrate biosynthesis; gluconeogenesis.</text>
</comment>
<comment type="pathway">
    <text evidence="1">Carbohydrate degradation; glycolysis; D-glyceraldehyde 3-phosphate and glycerone phosphate from D-glucose: step 2/4.</text>
</comment>
<comment type="subcellular location">
    <subcellularLocation>
        <location evidence="1">Cytoplasm</location>
    </subcellularLocation>
</comment>
<comment type="similarity">
    <text evidence="1">Belongs to the GPI family.</text>
</comment>
<proteinExistence type="inferred from homology"/>
<organism>
    <name type="scientific">Desulfitobacterium hafniense (strain Y51)</name>
    <dbReference type="NCBI Taxonomy" id="138119"/>
    <lineage>
        <taxon>Bacteria</taxon>
        <taxon>Bacillati</taxon>
        <taxon>Bacillota</taxon>
        <taxon>Clostridia</taxon>
        <taxon>Eubacteriales</taxon>
        <taxon>Desulfitobacteriaceae</taxon>
        <taxon>Desulfitobacterium</taxon>
    </lineage>
</organism>
<dbReference type="EC" id="5.3.1.9" evidence="1"/>
<dbReference type="EMBL" id="AP008230">
    <property type="protein sequence ID" value="BAE83823.1"/>
    <property type="molecule type" value="Genomic_DNA"/>
</dbReference>
<dbReference type="RefSeq" id="WP_011460008.1">
    <property type="nucleotide sequence ID" value="NC_007907.1"/>
</dbReference>
<dbReference type="SMR" id="Q24VW9"/>
<dbReference type="STRING" id="138119.DSY2034"/>
<dbReference type="KEGG" id="dsy:DSY2034"/>
<dbReference type="eggNOG" id="COG0166">
    <property type="taxonomic scope" value="Bacteria"/>
</dbReference>
<dbReference type="HOGENOM" id="CLU_033288_0_0_9"/>
<dbReference type="UniPathway" id="UPA00109">
    <property type="reaction ID" value="UER00181"/>
</dbReference>
<dbReference type="UniPathway" id="UPA00138"/>
<dbReference type="Proteomes" id="UP000001946">
    <property type="component" value="Chromosome"/>
</dbReference>
<dbReference type="GO" id="GO:0005829">
    <property type="term" value="C:cytosol"/>
    <property type="evidence" value="ECO:0007669"/>
    <property type="project" value="TreeGrafter"/>
</dbReference>
<dbReference type="GO" id="GO:0097367">
    <property type="term" value="F:carbohydrate derivative binding"/>
    <property type="evidence" value="ECO:0007669"/>
    <property type="project" value="InterPro"/>
</dbReference>
<dbReference type="GO" id="GO:0004347">
    <property type="term" value="F:glucose-6-phosphate isomerase activity"/>
    <property type="evidence" value="ECO:0007669"/>
    <property type="project" value="UniProtKB-UniRule"/>
</dbReference>
<dbReference type="GO" id="GO:0048029">
    <property type="term" value="F:monosaccharide binding"/>
    <property type="evidence" value="ECO:0007669"/>
    <property type="project" value="TreeGrafter"/>
</dbReference>
<dbReference type="GO" id="GO:0006094">
    <property type="term" value="P:gluconeogenesis"/>
    <property type="evidence" value="ECO:0007669"/>
    <property type="project" value="UniProtKB-UniRule"/>
</dbReference>
<dbReference type="GO" id="GO:0051156">
    <property type="term" value="P:glucose 6-phosphate metabolic process"/>
    <property type="evidence" value="ECO:0007669"/>
    <property type="project" value="TreeGrafter"/>
</dbReference>
<dbReference type="GO" id="GO:0006096">
    <property type="term" value="P:glycolytic process"/>
    <property type="evidence" value="ECO:0007669"/>
    <property type="project" value="UniProtKB-UniRule"/>
</dbReference>
<dbReference type="CDD" id="cd05015">
    <property type="entry name" value="SIS_PGI_1"/>
    <property type="match status" value="1"/>
</dbReference>
<dbReference type="CDD" id="cd05016">
    <property type="entry name" value="SIS_PGI_2"/>
    <property type="match status" value="1"/>
</dbReference>
<dbReference type="FunFam" id="3.40.50.10490:FF:000021">
    <property type="entry name" value="Glucose-6-phosphate isomerase"/>
    <property type="match status" value="1"/>
</dbReference>
<dbReference type="FunFam" id="3.40.50.10490:FF:000023">
    <property type="entry name" value="Glucose-6-phosphate isomerase"/>
    <property type="match status" value="1"/>
</dbReference>
<dbReference type="Gene3D" id="3.40.50.10490">
    <property type="entry name" value="Glucose-6-phosphate isomerase like protein, domain 1"/>
    <property type="match status" value="2"/>
</dbReference>
<dbReference type="HAMAP" id="MF_00473">
    <property type="entry name" value="G6P_isomerase"/>
    <property type="match status" value="1"/>
</dbReference>
<dbReference type="InterPro" id="IPR001672">
    <property type="entry name" value="G6P_Isomerase"/>
</dbReference>
<dbReference type="InterPro" id="IPR018189">
    <property type="entry name" value="Phosphoglucose_isomerase_CS"/>
</dbReference>
<dbReference type="InterPro" id="IPR046348">
    <property type="entry name" value="SIS_dom_sf"/>
</dbReference>
<dbReference type="InterPro" id="IPR035476">
    <property type="entry name" value="SIS_PGI_1"/>
</dbReference>
<dbReference type="InterPro" id="IPR035482">
    <property type="entry name" value="SIS_PGI_2"/>
</dbReference>
<dbReference type="NCBIfam" id="NF010696">
    <property type="entry name" value="PRK14096.1"/>
    <property type="match status" value="1"/>
</dbReference>
<dbReference type="PANTHER" id="PTHR11469">
    <property type="entry name" value="GLUCOSE-6-PHOSPHATE ISOMERASE"/>
    <property type="match status" value="1"/>
</dbReference>
<dbReference type="PANTHER" id="PTHR11469:SF1">
    <property type="entry name" value="GLUCOSE-6-PHOSPHATE ISOMERASE"/>
    <property type="match status" value="1"/>
</dbReference>
<dbReference type="Pfam" id="PF00342">
    <property type="entry name" value="PGI"/>
    <property type="match status" value="1"/>
</dbReference>
<dbReference type="PRINTS" id="PR00662">
    <property type="entry name" value="G6PISOMERASE"/>
</dbReference>
<dbReference type="SUPFAM" id="SSF53697">
    <property type="entry name" value="SIS domain"/>
    <property type="match status" value="1"/>
</dbReference>
<dbReference type="PROSITE" id="PS00174">
    <property type="entry name" value="P_GLUCOSE_ISOMERASE_2"/>
    <property type="match status" value="1"/>
</dbReference>
<dbReference type="PROSITE" id="PS51463">
    <property type="entry name" value="P_GLUCOSE_ISOMERASE_3"/>
    <property type="match status" value="1"/>
</dbReference>
<evidence type="ECO:0000255" key="1">
    <source>
        <dbReference type="HAMAP-Rule" id="MF_00473"/>
    </source>
</evidence>
<protein>
    <recommendedName>
        <fullName evidence="1">Glucose-6-phosphate isomerase</fullName>
        <shortName evidence="1">GPI</shortName>
        <ecNumber evidence="1">5.3.1.9</ecNumber>
    </recommendedName>
    <alternativeName>
        <fullName evidence="1">Phosphoglucose isomerase</fullName>
        <shortName evidence="1">PGI</shortName>
    </alternativeName>
    <alternativeName>
        <fullName evidence="1">Phosphohexose isomerase</fullName>
        <shortName evidence="1">PHI</shortName>
    </alternativeName>
</protein>
<reference key="1">
    <citation type="journal article" date="2006" name="J. Bacteriol.">
        <title>Complete genome sequence of the dehalorespiring bacterium Desulfitobacterium hafniense Y51 and comparison with Dehalococcoides ethenogenes 195.</title>
        <authorList>
            <person name="Nonaka H."/>
            <person name="Keresztes G."/>
            <person name="Shinoda Y."/>
            <person name="Ikenaga Y."/>
            <person name="Abe M."/>
            <person name="Naito K."/>
            <person name="Inatomi K."/>
            <person name="Furukawa K."/>
            <person name="Inui M."/>
            <person name="Yukawa H."/>
        </authorList>
    </citation>
    <scope>NUCLEOTIDE SEQUENCE [LARGE SCALE GENOMIC DNA]</scope>
    <source>
        <strain>Y51</strain>
    </source>
</reference>
<accession>Q24VW9</accession>